<evidence type="ECO:0000250" key="1">
    <source>
        <dbReference type="UniProtKB" id="Q6P9U4"/>
    </source>
</evidence>
<evidence type="ECO:0000255" key="2">
    <source>
        <dbReference type="PROSITE-ProRule" id="PRU00158"/>
    </source>
</evidence>
<evidence type="ECO:0000305" key="3"/>
<sequence>MKIWTSEHVFDHPWETVTTAAMQKYPNPMNPSVVGVDVLDRHIDASGKLHSHRLLSTEWGLPSIVKSIIGAARTKTYVQEHSVVDPVAKTMELKSTNISFTNMVSVDERLIYKPHPQDSEKTVLTQEAIITVKGVSLGSYLEGLMASTISSNANKGREAMEWVIHKLNAEIEELTASARGSIRTPMAAAAFVEK</sequence>
<protein>
    <recommendedName>
        <fullName>PRELI domain containing protein 3B</fullName>
    </recommendedName>
    <alternativeName>
        <fullName>Protein slowmo homolog 2</fullName>
    </alternativeName>
</protein>
<reference key="1">
    <citation type="submission" date="2007-05" db="EMBL/GenBank/DDBJ databases">
        <authorList>
            <consortium name="Porcine genome sequencing project"/>
        </authorList>
    </citation>
    <scope>NUCLEOTIDE SEQUENCE [LARGE SCALE GENOMIC DNA]</scope>
</reference>
<comment type="similarity">
    <text evidence="3">Belongs to the slowmo family.</text>
</comment>
<dbReference type="EMBL" id="CR956646">
    <property type="protein sequence ID" value="CAN13198.1"/>
    <property type="molecule type" value="Genomic_DNA"/>
</dbReference>
<dbReference type="RefSeq" id="NP_001107169.1">
    <property type="nucleotide sequence ID" value="NM_001113697.1"/>
</dbReference>
<dbReference type="SMR" id="A5GFX0"/>
<dbReference type="FunCoup" id="A5GFX0">
    <property type="interactions" value="1356"/>
</dbReference>
<dbReference type="STRING" id="9823.ENSSSCP00000008033"/>
<dbReference type="PaxDb" id="9823-ENSSSCP00000008033"/>
<dbReference type="Ensembl" id="ENSSSCT00000008252.4">
    <property type="protein sequence ID" value="ENSSSCP00000008033.2"/>
    <property type="gene ID" value="ENSSSCG00000007525.5"/>
</dbReference>
<dbReference type="Ensembl" id="ENSSSCT00090003803">
    <property type="protein sequence ID" value="ENSSSCP00090002418"/>
    <property type="gene ID" value="ENSSSCG00090002254"/>
</dbReference>
<dbReference type="GeneID" id="100134984"/>
<dbReference type="KEGG" id="ssc:100134984"/>
<dbReference type="CTD" id="51012"/>
<dbReference type="eggNOG" id="KOG3336">
    <property type="taxonomic scope" value="Eukaryota"/>
</dbReference>
<dbReference type="GeneTree" id="ENSGT00950000182810"/>
<dbReference type="HOGENOM" id="CLU_067902_7_0_1"/>
<dbReference type="InParanoid" id="A5GFX0"/>
<dbReference type="OMA" id="IMENTIS"/>
<dbReference type="OrthoDB" id="407630at2759"/>
<dbReference type="TreeFam" id="TF312873"/>
<dbReference type="Proteomes" id="UP000008227">
    <property type="component" value="Chromosome 17"/>
</dbReference>
<dbReference type="Proteomes" id="UP000314985">
    <property type="component" value="Unplaced"/>
</dbReference>
<dbReference type="Proteomes" id="UP000694570">
    <property type="component" value="Unplaced"/>
</dbReference>
<dbReference type="Proteomes" id="UP000694571">
    <property type="component" value="Unplaced"/>
</dbReference>
<dbReference type="Proteomes" id="UP000694720">
    <property type="component" value="Unplaced"/>
</dbReference>
<dbReference type="Proteomes" id="UP000694722">
    <property type="component" value="Unplaced"/>
</dbReference>
<dbReference type="Proteomes" id="UP000694723">
    <property type="component" value="Unplaced"/>
</dbReference>
<dbReference type="Proteomes" id="UP000694724">
    <property type="component" value="Unplaced"/>
</dbReference>
<dbReference type="Proteomes" id="UP000694725">
    <property type="component" value="Unplaced"/>
</dbReference>
<dbReference type="Proteomes" id="UP000694726">
    <property type="component" value="Unplaced"/>
</dbReference>
<dbReference type="Proteomes" id="UP000694727">
    <property type="component" value="Unplaced"/>
</dbReference>
<dbReference type="Proteomes" id="UP000694728">
    <property type="component" value="Unplaced"/>
</dbReference>
<dbReference type="Bgee" id="ENSSSCG00000007525">
    <property type="expression patterns" value="Expressed in caecum and 44 other cell types or tissues"/>
</dbReference>
<dbReference type="ExpressionAtlas" id="A5GFX0">
    <property type="expression patterns" value="baseline and differential"/>
</dbReference>
<dbReference type="GO" id="GO:0005758">
    <property type="term" value="C:mitochondrial intermembrane space"/>
    <property type="evidence" value="ECO:0000318"/>
    <property type="project" value="GO_Central"/>
</dbReference>
<dbReference type="GO" id="GO:1990050">
    <property type="term" value="F:phosphatidic acid transfer activity"/>
    <property type="evidence" value="ECO:0000318"/>
    <property type="project" value="GO_Central"/>
</dbReference>
<dbReference type="GO" id="GO:0015914">
    <property type="term" value="P:phospholipid transport"/>
    <property type="evidence" value="ECO:0000318"/>
    <property type="project" value="GO_Central"/>
</dbReference>
<dbReference type="InterPro" id="IPR006797">
    <property type="entry name" value="PRELI/MSF1_dom"/>
</dbReference>
<dbReference type="InterPro" id="IPR037365">
    <property type="entry name" value="Slowmo/Ups"/>
</dbReference>
<dbReference type="PANTHER" id="PTHR11158">
    <property type="entry name" value="MSF1/PX19 RELATED"/>
    <property type="match status" value="1"/>
</dbReference>
<dbReference type="Pfam" id="PF04707">
    <property type="entry name" value="PRELI"/>
    <property type="match status" value="1"/>
</dbReference>
<dbReference type="PROSITE" id="PS50904">
    <property type="entry name" value="PRELI_MSF1"/>
    <property type="match status" value="1"/>
</dbReference>
<gene>
    <name type="primary">PRELID3B</name>
    <name type="synonym">SLMO2</name>
</gene>
<organism>
    <name type="scientific">Sus scrofa</name>
    <name type="common">Pig</name>
    <dbReference type="NCBI Taxonomy" id="9823"/>
    <lineage>
        <taxon>Eukaryota</taxon>
        <taxon>Metazoa</taxon>
        <taxon>Chordata</taxon>
        <taxon>Craniata</taxon>
        <taxon>Vertebrata</taxon>
        <taxon>Euteleostomi</taxon>
        <taxon>Mammalia</taxon>
        <taxon>Eutheria</taxon>
        <taxon>Laurasiatheria</taxon>
        <taxon>Artiodactyla</taxon>
        <taxon>Suina</taxon>
        <taxon>Suidae</taxon>
        <taxon>Sus</taxon>
    </lineage>
</organism>
<keyword id="KW-0597">Phosphoprotein</keyword>
<keyword id="KW-1185">Reference proteome</keyword>
<name>PLD3B_PIG</name>
<accession>A5GFX0</accession>
<proteinExistence type="inferred from homology"/>
<feature type="chain" id="PRO_0000327684" description="PRELI domain containing protein 3B">
    <location>
        <begin position="1"/>
        <end position="194"/>
    </location>
</feature>
<feature type="domain" description="PRELI/MSF1" evidence="2">
    <location>
        <begin position="1"/>
        <end position="172"/>
    </location>
</feature>
<feature type="modified residue" description="Phosphoserine" evidence="1">
    <location>
        <position position="46"/>
    </location>
</feature>
<feature type="modified residue" description="Phosphoserine" evidence="1">
    <location>
        <position position="51"/>
    </location>
</feature>